<name>CAMT_MYCTU</name>
<dbReference type="EC" id="2.1.1.6" evidence="2"/>
<dbReference type="EMBL" id="AL123456">
    <property type="protein sequence ID" value="CCP42914.1"/>
    <property type="molecule type" value="Genomic_DNA"/>
</dbReference>
<dbReference type="RefSeq" id="NP_214701.1">
    <property type="nucleotide sequence ID" value="NC_000962.3"/>
</dbReference>
<dbReference type="RefSeq" id="WP_003401129.1">
    <property type="nucleotide sequence ID" value="NZ_NVQJ01000001.1"/>
</dbReference>
<dbReference type="PDB" id="6JCL">
    <property type="method" value="X-ray"/>
    <property type="resolution" value="1.64 A"/>
    <property type="chains" value="A/B/C/D/E/F/G/H=1-220"/>
</dbReference>
<dbReference type="PDB" id="6JCM">
    <property type="method" value="X-ray"/>
    <property type="resolution" value="2.08 A"/>
    <property type="chains" value="A/B/C/D=3-220"/>
</dbReference>
<dbReference type="PDBsum" id="6JCL"/>
<dbReference type="PDBsum" id="6JCM"/>
<dbReference type="SMR" id="O07431"/>
<dbReference type="FunCoup" id="O07431">
    <property type="interactions" value="138"/>
</dbReference>
<dbReference type="STRING" id="83332.Rv0187"/>
<dbReference type="PaxDb" id="83332-Rv0187"/>
<dbReference type="DNASU" id="886779"/>
<dbReference type="GeneID" id="886779"/>
<dbReference type="KEGG" id="mtu:Rv0187"/>
<dbReference type="KEGG" id="mtv:RVBD_0187"/>
<dbReference type="PATRIC" id="fig|83332.111.peg.215"/>
<dbReference type="TubercuList" id="Rv0187"/>
<dbReference type="eggNOG" id="COG4122">
    <property type="taxonomic scope" value="Bacteria"/>
</dbReference>
<dbReference type="InParanoid" id="O07431"/>
<dbReference type="OrthoDB" id="9799672at2"/>
<dbReference type="PhylomeDB" id="O07431"/>
<dbReference type="Proteomes" id="UP000001584">
    <property type="component" value="Chromosome"/>
</dbReference>
<dbReference type="GO" id="GO:0005886">
    <property type="term" value="C:plasma membrane"/>
    <property type="evidence" value="ECO:0007005"/>
    <property type="project" value="MTBBASE"/>
</dbReference>
<dbReference type="GO" id="GO:0016206">
    <property type="term" value="F:catechol O-methyltransferase activity"/>
    <property type="evidence" value="ECO:0007669"/>
    <property type="project" value="UniProtKB-EC"/>
</dbReference>
<dbReference type="GO" id="GO:0046872">
    <property type="term" value="F:metal ion binding"/>
    <property type="evidence" value="ECO:0007669"/>
    <property type="project" value="UniProtKB-KW"/>
</dbReference>
<dbReference type="GO" id="GO:0008757">
    <property type="term" value="F:S-adenosylmethionine-dependent methyltransferase activity"/>
    <property type="evidence" value="ECO:0000318"/>
    <property type="project" value="GO_Central"/>
</dbReference>
<dbReference type="GO" id="GO:0032259">
    <property type="term" value="P:methylation"/>
    <property type="evidence" value="ECO:0007669"/>
    <property type="project" value="UniProtKB-KW"/>
</dbReference>
<dbReference type="CDD" id="cd02440">
    <property type="entry name" value="AdoMet_MTases"/>
    <property type="match status" value="1"/>
</dbReference>
<dbReference type="FunFam" id="3.40.50.150:FF:000749">
    <property type="entry name" value="O-methyltransferase"/>
    <property type="match status" value="1"/>
</dbReference>
<dbReference type="Gene3D" id="3.40.50.150">
    <property type="entry name" value="Vaccinia Virus protein VP39"/>
    <property type="match status" value="1"/>
</dbReference>
<dbReference type="InterPro" id="IPR050362">
    <property type="entry name" value="Cation-dep_OMT"/>
</dbReference>
<dbReference type="InterPro" id="IPR029063">
    <property type="entry name" value="SAM-dependent_MTases_sf"/>
</dbReference>
<dbReference type="InterPro" id="IPR002935">
    <property type="entry name" value="SAM_O-MeTrfase"/>
</dbReference>
<dbReference type="PANTHER" id="PTHR10509:SF14">
    <property type="entry name" value="CAFFEOYL-COA O-METHYLTRANSFERASE 3-RELATED"/>
    <property type="match status" value="1"/>
</dbReference>
<dbReference type="PANTHER" id="PTHR10509">
    <property type="entry name" value="O-METHYLTRANSFERASE-RELATED"/>
    <property type="match status" value="1"/>
</dbReference>
<dbReference type="Pfam" id="PF01596">
    <property type="entry name" value="Methyltransf_3"/>
    <property type="match status" value="1"/>
</dbReference>
<dbReference type="SUPFAM" id="SSF53335">
    <property type="entry name" value="S-adenosyl-L-methionine-dependent methyltransferases"/>
    <property type="match status" value="1"/>
</dbReference>
<dbReference type="PROSITE" id="PS51682">
    <property type="entry name" value="SAM_OMT_I"/>
    <property type="match status" value="1"/>
</dbReference>
<proteinExistence type="evidence at protein level"/>
<keyword id="KW-0002">3D-structure</keyword>
<keyword id="KW-0479">Metal-binding</keyword>
<keyword id="KW-0489">Methyltransferase</keyword>
<keyword id="KW-1185">Reference proteome</keyword>
<keyword id="KW-0949">S-adenosyl-L-methionine</keyword>
<keyword id="KW-0808">Transferase</keyword>
<sequence length="220" mass="23097">MGMDQQPNPPDVDAFLDSTLVGDDPALAAALAASDAAELPRIAVSAQQGKFLCLLAGAIQARRVLEIGTLGGFSTIWLARGAGPQGRVVTLEYQPKHAEVARVNLQRAGVADRVEVVVGPALDTLPTLAGGPFDLVFIDADKENNVAYIQWAIRLARRGAVIVVDNVIRGGGILAESDDADAVAARRTLQMMGEHPGLDATAIQTVGRKGWDGFALALVR</sequence>
<comment type="function">
    <text evidence="2">Catechol O-methyltransferase that can use various catechol-like compounds such as gallic acid (GA), 3,4-dihydroxy-5-methoxy-benzoic acid (5OMeBA), protocatechuic acid (PCA), 3,4-dihydroxy-benzaldehyde (DHA), dopamine, caffeic acid (CA), luteolin, quercetin, and 5-hydroxyuridine.</text>
</comment>
<comment type="catalytic activity">
    <reaction evidence="2">
        <text>a catechol + S-adenosyl-L-methionine = a guaiacol + S-adenosyl-L-homocysteine + H(+)</text>
        <dbReference type="Rhea" id="RHEA:17877"/>
        <dbReference type="ChEBI" id="CHEBI:15378"/>
        <dbReference type="ChEBI" id="CHEBI:33566"/>
        <dbReference type="ChEBI" id="CHEBI:57856"/>
        <dbReference type="ChEBI" id="CHEBI:59789"/>
        <dbReference type="ChEBI" id="CHEBI:134251"/>
        <dbReference type="EC" id="2.1.1.6"/>
    </reaction>
</comment>
<comment type="cofactor">
    <cofactor evidence="2">
        <name>a divalent metal cation</name>
        <dbReference type="ChEBI" id="CHEBI:60240"/>
    </cofactor>
</comment>
<comment type="activity regulation">
    <text evidence="2">Inhibited by EDTA.</text>
</comment>
<comment type="biophysicochemical properties">
    <kinetics>
        <KM evidence="2">0.03 mM for 5OMeBA</KM>
        <KM evidence="2">0.15 mM for PCA</KM>
        <KM evidence="2">0.49 mM for CA</KM>
        <text evidence="2">kcat is 0.080 min(-1) with 5OMeBA as substrate. kcat is 0.22 min(-1) with PCA as substrate. kcat is 0.43 min(-1) with CA as substrate.</text>
    </kinetics>
</comment>
<comment type="subunit">
    <text evidence="2">Homodimer.</text>
</comment>
<comment type="similarity">
    <text evidence="1">Belongs to the class I-like SAM-binding methyltransferase superfamily. Cation-dependent O-methyltransferase family.</text>
</comment>
<protein>
    <recommendedName>
        <fullName evidence="3">Catechol O-methyltransferase</fullName>
        <shortName evidence="3">COMT</shortName>
        <ecNumber evidence="2">2.1.1.6</ecNumber>
    </recommendedName>
</protein>
<evidence type="ECO:0000255" key="1">
    <source>
        <dbReference type="PROSITE-ProRule" id="PRU01019"/>
    </source>
</evidence>
<evidence type="ECO:0000269" key="2">
    <source>
    </source>
</evidence>
<evidence type="ECO:0000303" key="3">
    <source>
    </source>
</evidence>
<evidence type="ECO:0000305" key="4">
    <source>
    </source>
</evidence>
<evidence type="ECO:0000312" key="5">
    <source>
        <dbReference type="EMBL" id="CCP42914.1"/>
    </source>
</evidence>
<evidence type="ECO:0007744" key="6">
    <source>
    </source>
</evidence>
<evidence type="ECO:0007829" key="7">
    <source>
        <dbReference type="PDB" id="6JCL"/>
    </source>
</evidence>
<evidence type="ECO:0007829" key="8">
    <source>
        <dbReference type="PDB" id="6JCM"/>
    </source>
</evidence>
<reference key="1">
    <citation type="journal article" date="1998" name="Nature">
        <title>Deciphering the biology of Mycobacterium tuberculosis from the complete genome sequence.</title>
        <authorList>
            <person name="Cole S.T."/>
            <person name="Brosch R."/>
            <person name="Parkhill J."/>
            <person name="Garnier T."/>
            <person name="Churcher C.M."/>
            <person name="Harris D.E."/>
            <person name="Gordon S.V."/>
            <person name="Eiglmeier K."/>
            <person name="Gas S."/>
            <person name="Barry C.E. III"/>
            <person name="Tekaia F."/>
            <person name="Badcock K."/>
            <person name="Basham D."/>
            <person name="Brown D."/>
            <person name="Chillingworth T."/>
            <person name="Connor R."/>
            <person name="Davies R.M."/>
            <person name="Devlin K."/>
            <person name="Feltwell T."/>
            <person name="Gentles S."/>
            <person name="Hamlin N."/>
            <person name="Holroyd S."/>
            <person name="Hornsby T."/>
            <person name="Jagels K."/>
            <person name="Krogh A."/>
            <person name="McLean J."/>
            <person name="Moule S."/>
            <person name="Murphy L.D."/>
            <person name="Oliver S."/>
            <person name="Osborne J."/>
            <person name="Quail M.A."/>
            <person name="Rajandream M.A."/>
            <person name="Rogers J."/>
            <person name="Rutter S."/>
            <person name="Seeger K."/>
            <person name="Skelton S."/>
            <person name="Squares S."/>
            <person name="Squares R."/>
            <person name="Sulston J.E."/>
            <person name="Taylor K."/>
            <person name="Whitehead S."/>
            <person name="Barrell B.G."/>
        </authorList>
    </citation>
    <scope>NUCLEOTIDE SEQUENCE [LARGE SCALE GENOMIC DNA]</scope>
    <source>
        <strain>ATCC 25618 / H37Rv</strain>
    </source>
</reference>
<reference evidence="6" key="2">
    <citation type="journal article" date="2011" name="Mol. Cell. Proteomics">
        <title>Proteogenomic analysis of Mycobacterium tuberculosis by high resolution mass spectrometry.</title>
        <authorList>
            <person name="Kelkar D.S."/>
            <person name="Kumar D."/>
            <person name="Kumar P."/>
            <person name="Balakrishnan L."/>
            <person name="Muthusamy B."/>
            <person name="Yadav A.K."/>
            <person name="Shrivastava P."/>
            <person name="Marimuthu A."/>
            <person name="Anand S."/>
            <person name="Sundaram H."/>
            <person name="Kingsbury R."/>
            <person name="Harsha H.C."/>
            <person name="Nair B."/>
            <person name="Prasad T.S."/>
            <person name="Chauhan D.S."/>
            <person name="Katoch K."/>
            <person name="Katoch V.M."/>
            <person name="Kumar P."/>
            <person name="Chaerkady R."/>
            <person name="Ramachandran S."/>
            <person name="Dash D."/>
            <person name="Pandey A."/>
        </authorList>
    </citation>
    <scope>IDENTIFICATION BY MASS SPECTROMETRY [LARGE SCALE ANALYSIS]</scope>
</reference>
<reference key="3">
    <citation type="journal article" date="2019" name="Sci. Rep.">
        <title>Structural and biochemical characterization of Rv0187, an O-methyltransferase from Mycobacterium tuberculosis.</title>
        <authorList>
            <person name="Lee S."/>
            <person name="Kang J."/>
            <person name="Kim J."/>
        </authorList>
    </citation>
    <scope>X-RAY CRYSTALLOGRAPHY (1.64 ANGSTROMS) OF APOENZYME AND IN COMPLEX WITH S-ADENOSYL-L-HOMOCYSTEINE AND STRONTIUM ION</scope>
    <scope>FUNCTION</scope>
    <scope>CATALYTIC ACTIVITY</scope>
    <scope>COFACTOR</scope>
    <scope>ACTIVITY REGULATION</scope>
    <scope>BIOPHYSICOCHEMICAL PROPERTIES</scope>
    <scope>SUBUNIT</scope>
    <scope>MUTAGENESIS OF LYS-142</scope>
    <source>
        <strain>H37Rv</strain>
    </source>
</reference>
<gene>
    <name evidence="5" type="ordered locus">Rv0187</name>
</gene>
<accession>O07431</accession>
<accession>F2GLY5</accession>
<accession>I6WXN4</accession>
<accession>L0T2S4</accession>
<feature type="chain" id="PRO_0000448281" description="Catechol O-methyltransferase">
    <location>
        <begin position="1"/>
        <end position="220"/>
    </location>
</feature>
<feature type="binding site" evidence="1 4">
    <location>
        <position position="44"/>
    </location>
    <ligand>
        <name>S-adenosyl-L-methionine</name>
        <dbReference type="ChEBI" id="CHEBI:59789"/>
    </ligand>
</feature>
<feature type="binding site" evidence="1">
    <location>
        <position position="66"/>
    </location>
    <ligand>
        <name>S-adenosyl-L-methionine</name>
        <dbReference type="ChEBI" id="CHEBI:59789"/>
    </ligand>
</feature>
<feature type="binding site" evidence="1 4">
    <location>
        <begin position="68"/>
        <end position="69"/>
    </location>
    <ligand>
        <name>S-adenosyl-L-methionine</name>
        <dbReference type="ChEBI" id="CHEBI:59789"/>
    </ligand>
</feature>
<feature type="binding site" evidence="1 4">
    <location>
        <position position="74"/>
    </location>
    <ligand>
        <name>S-adenosyl-L-methionine</name>
        <dbReference type="ChEBI" id="CHEBI:59789"/>
    </ligand>
</feature>
<feature type="binding site" evidence="1 4">
    <location>
        <position position="92"/>
    </location>
    <ligand>
        <name>S-adenosyl-L-methionine</name>
        <dbReference type="ChEBI" id="CHEBI:59789"/>
    </ligand>
</feature>
<feature type="binding site" evidence="1 4">
    <location>
        <position position="121"/>
    </location>
    <ligand>
        <name>S-adenosyl-L-methionine</name>
        <dbReference type="ChEBI" id="CHEBI:59789"/>
    </ligand>
</feature>
<feature type="binding site" evidence="1 2">
    <location>
        <position position="139"/>
    </location>
    <ligand>
        <name>a divalent metal cation</name>
        <dbReference type="ChEBI" id="CHEBI:60240"/>
    </ligand>
</feature>
<feature type="binding site" evidence="1 4">
    <location>
        <position position="141"/>
    </location>
    <ligand>
        <name>S-adenosyl-L-methionine</name>
        <dbReference type="ChEBI" id="CHEBI:59789"/>
    </ligand>
</feature>
<feature type="binding site" evidence="1 2">
    <location>
        <position position="165"/>
    </location>
    <ligand>
        <name>a divalent metal cation</name>
        <dbReference type="ChEBI" id="CHEBI:60240"/>
    </ligand>
</feature>
<feature type="binding site" evidence="1 2">
    <location>
        <position position="166"/>
    </location>
    <ligand>
        <name>a divalent metal cation</name>
        <dbReference type="ChEBI" id="CHEBI:60240"/>
    </ligand>
</feature>
<feature type="mutagenesis site" description="Retains a low but substantial activity." evidence="2">
    <original>K</original>
    <variation>A</variation>
    <location>
        <position position="142"/>
    </location>
</feature>
<feature type="helix" evidence="7">
    <location>
        <begin position="9"/>
        <end position="20"/>
    </location>
</feature>
<feature type="helix" evidence="7">
    <location>
        <begin position="25"/>
        <end position="36"/>
    </location>
</feature>
<feature type="helix" evidence="7">
    <location>
        <begin position="46"/>
        <end position="58"/>
    </location>
</feature>
<feature type="strand" evidence="7">
    <location>
        <begin position="62"/>
        <end position="67"/>
    </location>
</feature>
<feature type="helix" evidence="8">
    <location>
        <begin position="70"/>
        <end position="72"/>
    </location>
</feature>
<feature type="helix" evidence="7">
    <location>
        <begin position="73"/>
        <end position="82"/>
    </location>
</feature>
<feature type="strand" evidence="7">
    <location>
        <begin position="87"/>
        <end position="93"/>
    </location>
</feature>
<feature type="helix" evidence="7">
    <location>
        <begin position="95"/>
        <end position="107"/>
    </location>
</feature>
<feature type="helix" evidence="7">
    <location>
        <begin position="111"/>
        <end position="113"/>
    </location>
</feature>
<feature type="strand" evidence="7">
    <location>
        <begin position="114"/>
        <end position="119"/>
    </location>
</feature>
<feature type="helix" evidence="7">
    <location>
        <begin position="121"/>
        <end position="124"/>
    </location>
</feature>
<feature type="helix" evidence="7">
    <location>
        <begin position="125"/>
        <end position="127"/>
    </location>
</feature>
<feature type="strand" evidence="7">
    <location>
        <begin position="132"/>
        <end position="138"/>
    </location>
</feature>
<feature type="helix" evidence="7">
    <location>
        <begin position="142"/>
        <end position="144"/>
    </location>
</feature>
<feature type="helix" evidence="7">
    <location>
        <begin position="145"/>
        <end position="155"/>
    </location>
</feature>
<feature type="strand" evidence="7">
    <location>
        <begin position="156"/>
        <end position="165"/>
    </location>
</feature>
<feature type="helix" evidence="7">
    <location>
        <begin position="169"/>
        <end position="174"/>
    </location>
</feature>
<feature type="helix" evidence="7">
    <location>
        <begin position="180"/>
        <end position="194"/>
    </location>
</feature>
<feature type="strand" evidence="7">
    <location>
        <begin position="198"/>
        <end position="207"/>
    </location>
</feature>
<feature type="strand" evidence="7">
    <location>
        <begin position="211"/>
        <end position="219"/>
    </location>
</feature>
<organism>
    <name type="scientific">Mycobacterium tuberculosis (strain ATCC 25618 / H37Rv)</name>
    <dbReference type="NCBI Taxonomy" id="83332"/>
    <lineage>
        <taxon>Bacteria</taxon>
        <taxon>Bacillati</taxon>
        <taxon>Actinomycetota</taxon>
        <taxon>Actinomycetes</taxon>
        <taxon>Mycobacteriales</taxon>
        <taxon>Mycobacteriaceae</taxon>
        <taxon>Mycobacterium</taxon>
        <taxon>Mycobacterium tuberculosis complex</taxon>
    </lineage>
</organism>